<organism>
    <name type="scientific">Burkholderia cenocepacia (strain ATCC BAA-245 / DSM 16553 / LMG 16656 / NCTC 13227 / J2315 / CF5610)</name>
    <name type="common">Burkholderia cepacia (strain J2315)</name>
    <dbReference type="NCBI Taxonomy" id="216591"/>
    <lineage>
        <taxon>Bacteria</taxon>
        <taxon>Pseudomonadati</taxon>
        <taxon>Pseudomonadota</taxon>
        <taxon>Betaproteobacteria</taxon>
        <taxon>Burkholderiales</taxon>
        <taxon>Burkholderiaceae</taxon>
        <taxon>Burkholderia</taxon>
        <taxon>Burkholderia cepacia complex</taxon>
    </lineage>
</organism>
<name>IHFB_BURCJ</name>
<gene>
    <name evidence="1" type="primary">ihfB</name>
    <name evidence="1" type="synonym">himD</name>
    <name type="ordered locus">BceJ2315_28850</name>
    <name type="ORF">BCAL2949</name>
</gene>
<proteinExistence type="inferred from homology"/>
<keyword id="KW-0233">DNA recombination</keyword>
<keyword id="KW-0238">DNA-binding</keyword>
<keyword id="KW-0804">Transcription</keyword>
<keyword id="KW-0805">Transcription regulation</keyword>
<keyword id="KW-0810">Translation regulation</keyword>
<comment type="function">
    <text evidence="1">This protein is one of the two subunits of integration host factor, a specific DNA-binding protein that functions in genetic recombination as well as in transcriptional and translational control.</text>
</comment>
<comment type="subunit">
    <text evidence="1">Heterodimer of an alpha and a beta chain.</text>
</comment>
<comment type="similarity">
    <text evidence="1">Belongs to the bacterial histone-like protein family.</text>
</comment>
<dbReference type="EMBL" id="AM747720">
    <property type="protein sequence ID" value="CAR53251.1"/>
    <property type="molecule type" value="Genomic_DNA"/>
</dbReference>
<dbReference type="RefSeq" id="WP_006486894.1">
    <property type="nucleotide sequence ID" value="NC_011000.1"/>
</dbReference>
<dbReference type="SMR" id="B4EB39"/>
<dbReference type="KEGG" id="bcj:BCAL2949"/>
<dbReference type="eggNOG" id="COG0776">
    <property type="taxonomic scope" value="Bacteria"/>
</dbReference>
<dbReference type="HOGENOM" id="CLU_105066_2_0_4"/>
<dbReference type="BioCyc" id="BCEN216591:G1G1V-3258-MONOMER"/>
<dbReference type="Proteomes" id="UP000001035">
    <property type="component" value="Chromosome 1"/>
</dbReference>
<dbReference type="GO" id="GO:0005694">
    <property type="term" value="C:chromosome"/>
    <property type="evidence" value="ECO:0007669"/>
    <property type="project" value="InterPro"/>
</dbReference>
<dbReference type="GO" id="GO:0005829">
    <property type="term" value="C:cytosol"/>
    <property type="evidence" value="ECO:0007669"/>
    <property type="project" value="TreeGrafter"/>
</dbReference>
<dbReference type="GO" id="GO:0003677">
    <property type="term" value="F:DNA binding"/>
    <property type="evidence" value="ECO:0007669"/>
    <property type="project" value="UniProtKB-UniRule"/>
</dbReference>
<dbReference type="GO" id="GO:0030527">
    <property type="term" value="F:structural constituent of chromatin"/>
    <property type="evidence" value="ECO:0007669"/>
    <property type="project" value="InterPro"/>
</dbReference>
<dbReference type="GO" id="GO:0006310">
    <property type="term" value="P:DNA recombination"/>
    <property type="evidence" value="ECO:0007669"/>
    <property type="project" value="UniProtKB-UniRule"/>
</dbReference>
<dbReference type="GO" id="GO:0006355">
    <property type="term" value="P:regulation of DNA-templated transcription"/>
    <property type="evidence" value="ECO:0007669"/>
    <property type="project" value="UniProtKB-UniRule"/>
</dbReference>
<dbReference type="GO" id="GO:0006417">
    <property type="term" value="P:regulation of translation"/>
    <property type="evidence" value="ECO:0007669"/>
    <property type="project" value="UniProtKB-UniRule"/>
</dbReference>
<dbReference type="CDD" id="cd13836">
    <property type="entry name" value="IHF_B"/>
    <property type="match status" value="1"/>
</dbReference>
<dbReference type="Gene3D" id="4.10.520.10">
    <property type="entry name" value="IHF-like DNA-binding proteins"/>
    <property type="match status" value="1"/>
</dbReference>
<dbReference type="HAMAP" id="MF_00381">
    <property type="entry name" value="IHF_beta"/>
    <property type="match status" value="1"/>
</dbReference>
<dbReference type="InterPro" id="IPR000119">
    <property type="entry name" value="Hist_DNA-bd"/>
</dbReference>
<dbReference type="InterPro" id="IPR010992">
    <property type="entry name" value="IHF-like_DNA-bd_dom_sf"/>
</dbReference>
<dbReference type="InterPro" id="IPR005685">
    <property type="entry name" value="IHF_beta"/>
</dbReference>
<dbReference type="NCBIfam" id="TIGR00988">
    <property type="entry name" value="hip"/>
    <property type="match status" value="1"/>
</dbReference>
<dbReference type="NCBIfam" id="NF001222">
    <property type="entry name" value="PRK00199.1"/>
    <property type="match status" value="1"/>
</dbReference>
<dbReference type="PANTHER" id="PTHR33175">
    <property type="entry name" value="DNA-BINDING PROTEIN HU"/>
    <property type="match status" value="1"/>
</dbReference>
<dbReference type="PANTHER" id="PTHR33175:SF5">
    <property type="entry name" value="INTEGRATION HOST FACTOR SUBUNIT BETA"/>
    <property type="match status" value="1"/>
</dbReference>
<dbReference type="Pfam" id="PF00216">
    <property type="entry name" value="Bac_DNA_binding"/>
    <property type="match status" value="1"/>
</dbReference>
<dbReference type="PRINTS" id="PR01727">
    <property type="entry name" value="DNABINDINGHU"/>
</dbReference>
<dbReference type="SMART" id="SM00411">
    <property type="entry name" value="BHL"/>
    <property type="match status" value="1"/>
</dbReference>
<dbReference type="SUPFAM" id="SSF47729">
    <property type="entry name" value="IHF-like DNA-binding proteins"/>
    <property type="match status" value="1"/>
</dbReference>
<reference key="1">
    <citation type="journal article" date="2009" name="J. Bacteriol.">
        <title>The genome of Burkholderia cenocepacia J2315, an epidemic pathogen of cystic fibrosis patients.</title>
        <authorList>
            <person name="Holden M.T."/>
            <person name="Seth-Smith H.M."/>
            <person name="Crossman L.C."/>
            <person name="Sebaihia M."/>
            <person name="Bentley S.D."/>
            <person name="Cerdeno-Tarraga A.M."/>
            <person name="Thomson N.R."/>
            <person name="Bason N."/>
            <person name="Quail M.A."/>
            <person name="Sharp S."/>
            <person name="Cherevach I."/>
            <person name="Churcher C."/>
            <person name="Goodhead I."/>
            <person name="Hauser H."/>
            <person name="Holroyd N."/>
            <person name="Mungall K."/>
            <person name="Scott P."/>
            <person name="Walker D."/>
            <person name="White B."/>
            <person name="Rose H."/>
            <person name="Iversen P."/>
            <person name="Mil-Homens D."/>
            <person name="Rocha E.P."/>
            <person name="Fialho A.M."/>
            <person name="Baldwin A."/>
            <person name="Dowson C."/>
            <person name="Barrell B.G."/>
            <person name="Govan J.R."/>
            <person name="Vandamme P."/>
            <person name="Hart C.A."/>
            <person name="Mahenthiralingam E."/>
            <person name="Parkhill J."/>
        </authorList>
    </citation>
    <scope>NUCLEOTIDE SEQUENCE [LARGE SCALE GENOMIC DNA]</scope>
    <source>
        <strain>ATCC BAA-245 / DSM 16553 / LMG 16656 / NCTC 13227 / J2315 / CF5610</strain>
    </source>
</reference>
<accession>B4EB39</accession>
<evidence type="ECO:0000255" key="1">
    <source>
        <dbReference type="HAMAP-Rule" id="MF_00381"/>
    </source>
</evidence>
<evidence type="ECO:0000256" key="2">
    <source>
        <dbReference type="SAM" id="MobiDB-lite"/>
    </source>
</evidence>
<protein>
    <recommendedName>
        <fullName evidence="1">Integration host factor subunit beta</fullName>
        <shortName evidence="1">IHF-beta</shortName>
    </recommendedName>
</protein>
<feature type="chain" id="PRO_1000122191" description="Integration host factor subunit beta">
    <location>
        <begin position="1"/>
        <end position="107"/>
    </location>
</feature>
<feature type="region of interest" description="Disordered" evidence="2">
    <location>
        <begin position="76"/>
        <end position="107"/>
    </location>
</feature>
<feature type="compositionally biased region" description="Basic and acidic residues" evidence="2">
    <location>
        <begin position="82"/>
        <end position="101"/>
    </location>
</feature>
<sequence>MTKSELVAQLASRFPQLVLKDADFAVKTMLDAMSDALAKGHRIEIRGFGSFGLNRRPARVGRNPKSGEKVQVPEKFVPHFKPGKELRERVDGRAGEPLKADDPDDER</sequence>